<accession>C1EV72</accession>
<evidence type="ECO:0000255" key="1">
    <source>
        <dbReference type="HAMAP-Rule" id="MF_00112"/>
    </source>
</evidence>
<reference key="1">
    <citation type="submission" date="2009-02" db="EMBL/GenBank/DDBJ databases">
        <title>Genome sequence of Bacillus cereus 03BB102.</title>
        <authorList>
            <person name="Dodson R.J."/>
            <person name="Jackson P."/>
            <person name="Munk A.C."/>
            <person name="Brettin T."/>
            <person name="Bruce D."/>
            <person name="Detter C."/>
            <person name="Tapia R."/>
            <person name="Han C."/>
            <person name="Sutton G."/>
            <person name="Sims D."/>
        </authorList>
    </citation>
    <scope>NUCLEOTIDE SEQUENCE [LARGE SCALE GENOMIC DNA]</scope>
    <source>
        <strain>03BB102</strain>
    </source>
</reference>
<organism>
    <name type="scientific">Bacillus cereus (strain 03BB102)</name>
    <dbReference type="NCBI Taxonomy" id="572264"/>
    <lineage>
        <taxon>Bacteria</taxon>
        <taxon>Bacillati</taxon>
        <taxon>Bacillota</taxon>
        <taxon>Bacilli</taxon>
        <taxon>Bacillales</taxon>
        <taxon>Bacillaceae</taxon>
        <taxon>Bacillus</taxon>
        <taxon>Bacillus cereus group</taxon>
    </lineage>
</organism>
<name>PCRB_BACC3</name>
<comment type="function">
    <text evidence="1">Prenyltransferase that catalyzes in vivo the transfer of the heptaprenyl moiety of heptaprenyl pyrophosphate (HepPP; 35 carbon atoms) to the C3 hydroxyl of sn-glycerol-1-phosphate (G1P), producing heptaprenylglyceryl phosphate (HepGP). This reaction is an ether-bond-formation step in the biosynthesis of archaea-type G1P-based membrane lipids found in Bacillales.</text>
</comment>
<comment type="catalytic activity">
    <reaction evidence="1">
        <text>sn-glycerol 1-phosphate + all-trans-heptaprenyl diphosphate = 3-heptaprenyl-sn-glycero-1-phosphate + diphosphate</text>
        <dbReference type="Rhea" id="RHEA:33495"/>
        <dbReference type="ChEBI" id="CHEBI:33019"/>
        <dbReference type="ChEBI" id="CHEBI:57685"/>
        <dbReference type="ChEBI" id="CHEBI:58206"/>
        <dbReference type="ChEBI" id="CHEBI:64781"/>
        <dbReference type="EC" id="2.5.1.n9"/>
    </reaction>
</comment>
<comment type="cofactor">
    <cofactor evidence="1">
        <name>Mg(2+)</name>
        <dbReference type="ChEBI" id="CHEBI:18420"/>
    </cofactor>
</comment>
<comment type="pathway">
    <text evidence="1">Membrane lipid metabolism; glycerophospholipid metabolism.</text>
</comment>
<comment type="subunit">
    <text evidence="1">Homodimer.</text>
</comment>
<comment type="similarity">
    <text evidence="1">Belongs to the GGGP/HepGP synthase family. Group I subfamily.</text>
</comment>
<sequence>MYDISGWKHVFKLDPNKELSDEHLEMICESGTDAVIVGGSDGVTIDNVLHMLVSIRRYAVPCVLEVSDVEAITPGFDFYYIPSVLNSRKVEWVTGVHHEALKEFGDIMDWDEIFMEGYCVLNPEAKVAQLTDAKCDVTEDDVIAYARLADKLLRLPIFYLEYSGTYGDVELVKNVKAELKQAKLYYGGGISNAEQAEEMAQHADTVVVGNIIYDDIKAALKTVKAVKGE</sequence>
<feature type="chain" id="PRO_1000119131" description="Heptaprenylglyceryl phosphate synthase">
    <location>
        <begin position="1"/>
        <end position="229"/>
    </location>
</feature>
<feature type="binding site" evidence="1">
    <location>
        <position position="12"/>
    </location>
    <ligand>
        <name>sn-glycerol 1-phosphate</name>
        <dbReference type="ChEBI" id="CHEBI:57685"/>
    </ligand>
</feature>
<feature type="binding site" evidence="1">
    <location>
        <position position="14"/>
    </location>
    <ligand>
        <name>Mg(2+)</name>
        <dbReference type="ChEBI" id="CHEBI:18420"/>
    </ligand>
</feature>
<feature type="binding site" evidence="1">
    <location>
        <position position="40"/>
    </location>
    <ligand>
        <name>Mg(2+)</name>
        <dbReference type="ChEBI" id="CHEBI:18420"/>
    </ligand>
</feature>
<feature type="binding site" evidence="1">
    <location>
        <begin position="159"/>
        <end position="164"/>
    </location>
    <ligand>
        <name>sn-glycerol 1-phosphate</name>
        <dbReference type="ChEBI" id="CHEBI:57685"/>
    </ligand>
</feature>
<feature type="binding site" evidence="1">
    <location>
        <position position="189"/>
    </location>
    <ligand>
        <name>sn-glycerol 1-phosphate</name>
        <dbReference type="ChEBI" id="CHEBI:57685"/>
    </ligand>
</feature>
<feature type="binding site" evidence="1">
    <location>
        <begin position="209"/>
        <end position="210"/>
    </location>
    <ligand>
        <name>sn-glycerol 1-phosphate</name>
        <dbReference type="ChEBI" id="CHEBI:57685"/>
    </ligand>
</feature>
<proteinExistence type="inferred from homology"/>
<protein>
    <recommendedName>
        <fullName evidence="1">Heptaprenylglyceryl phosphate synthase</fullName>
        <shortName evidence="1">HepGP synthase</shortName>
        <ecNumber evidence="1">2.5.1.n9</ecNumber>
    </recommendedName>
    <alternativeName>
        <fullName evidence="1">Glycerol-1-phosphate heptaprenyltransferase</fullName>
    </alternativeName>
</protein>
<dbReference type="EC" id="2.5.1.n9" evidence="1"/>
<dbReference type="EMBL" id="CP001407">
    <property type="protein sequence ID" value="ACO27349.1"/>
    <property type="molecule type" value="Genomic_DNA"/>
</dbReference>
<dbReference type="RefSeq" id="WP_000272088.1">
    <property type="nucleotide sequence ID" value="NZ_CP009318.1"/>
</dbReference>
<dbReference type="SMR" id="C1EV72"/>
<dbReference type="KEGG" id="bcx:BCA_0377"/>
<dbReference type="PATRIC" id="fig|572264.18.peg.366"/>
<dbReference type="UniPathway" id="UPA00940"/>
<dbReference type="Proteomes" id="UP000002210">
    <property type="component" value="Chromosome"/>
</dbReference>
<dbReference type="GO" id="GO:0120536">
    <property type="term" value="F:heptaprenylglyceryl phosphate synthase activity"/>
    <property type="evidence" value="ECO:0007669"/>
    <property type="project" value="RHEA"/>
</dbReference>
<dbReference type="GO" id="GO:0000287">
    <property type="term" value="F:magnesium ion binding"/>
    <property type="evidence" value="ECO:0007669"/>
    <property type="project" value="UniProtKB-UniRule"/>
</dbReference>
<dbReference type="GO" id="GO:0046474">
    <property type="term" value="P:glycerophospholipid biosynthetic process"/>
    <property type="evidence" value="ECO:0007669"/>
    <property type="project" value="UniProtKB-UniRule"/>
</dbReference>
<dbReference type="CDD" id="cd02812">
    <property type="entry name" value="PcrB_like"/>
    <property type="match status" value="1"/>
</dbReference>
<dbReference type="FunFam" id="3.20.20.390:FF:000001">
    <property type="entry name" value="Heptaprenylglyceryl phosphate synthase"/>
    <property type="match status" value="1"/>
</dbReference>
<dbReference type="Gene3D" id="3.20.20.390">
    <property type="entry name" value="FMN-linked oxidoreductases"/>
    <property type="match status" value="1"/>
</dbReference>
<dbReference type="HAMAP" id="MF_00112">
    <property type="entry name" value="GGGP_HepGP_synthase"/>
    <property type="match status" value="1"/>
</dbReference>
<dbReference type="InterPro" id="IPR039074">
    <property type="entry name" value="GGGP/HepGP_synthase_I"/>
</dbReference>
<dbReference type="InterPro" id="IPR038597">
    <property type="entry name" value="GGGP/HepGP_synthase_sf"/>
</dbReference>
<dbReference type="InterPro" id="IPR008205">
    <property type="entry name" value="GGGP_HepGP_synthase"/>
</dbReference>
<dbReference type="NCBIfam" id="TIGR01768">
    <property type="entry name" value="GGGP-family"/>
    <property type="match status" value="1"/>
</dbReference>
<dbReference type="NCBIfam" id="NF003197">
    <property type="entry name" value="PRK04169.1-1"/>
    <property type="match status" value="1"/>
</dbReference>
<dbReference type="NCBIfam" id="NF003199">
    <property type="entry name" value="PRK04169.1-3"/>
    <property type="match status" value="1"/>
</dbReference>
<dbReference type="PANTHER" id="PTHR40029">
    <property type="match status" value="1"/>
</dbReference>
<dbReference type="PANTHER" id="PTHR40029:SF2">
    <property type="entry name" value="HEPTAPRENYLGLYCERYL PHOSPHATE SYNTHASE"/>
    <property type="match status" value="1"/>
</dbReference>
<dbReference type="Pfam" id="PF01884">
    <property type="entry name" value="PcrB"/>
    <property type="match status" value="1"/>
</dbReference>
<dbReference type="SUPFAM" id="SSF51395">
    <property type="entry name" value="FMN-linked oxidoreductases"/>
    <property type="match status" value="1"/>
</dbReference>
<gene>
    <name evidence="1" type="primary">pcrB</name>
    <name type="ordered locus">BCA_0377</name>
</gene>
<keyword id="KW-0444">Lipid biosynthesis</keyword>
<keyword id="KW-0443">Lipid metabolism</keyword>
<keyword id="KW-0460">Magnesium</keyword>
<keyword id="KW-0479">Metal-binding</keyword>
<keyword id="KW-0594">Phospholipid biosynthesis</keyword>
<keyword id="KW-1208">Phospholipid metabolism</keyword>
<keyword id="KW-0808">Transferase</keyword>